<organism>
    <name type="scientific">Aromatoleum aromaticum (strain DSM 19018 / LMG 30748 / EbN1)</name>
    <name type="common">Azoarcus sp. (strain EbN1)</name>
    <dbReference type="NCBI Taxonomy" id="76114"/>
    <lineage>
        <taxon>Bacteria</taxon>
        <taxon>Pseudomonadati</taxon>
        <taxon>Pseudomonadota</taxon>
        <taxon>Betaproteobacteria</taxon>
        <taxon>Rhodocyclales</taxon>
        <taxon>Rhodocyclaceae</taxon>
        <taxon>Aromatoleum</taxon>
    </lineage>
</organism>
<comment type="function">
    <text evidence="1">Catalyzes the synthesis of GMP from XMP.</text>
</comment>
<comment type="catalytic activity">
    <reaction evidence="1">
        <text>XMP + L-glutamine + ATP + H2O = GMP + L-glutamate + AMP + diphosphate + 2 H(+)</text>
        <dbReference type="Rhea" id="RHEA:11680"/>
        <dbReference type="ChEBI" id="CHEBI:15377"/>
        <dbReference type="ChEBI" id="CHEBI:15378"/>
        <dbReference type="ChEBI" id="CHEBI:29985"/>
        <dbReference type="ChEBI" id="CHEBI:30616"/>
        <dbReference type="ChEBI" id="CHEBI:33019"/>
        <dbReference type="ChEBI" id="CHEBI:57464"/>
        <dbReference type="ChEBI" id="CHEBI:58115"/>
        <dbReference type="ChEBI" id="CHEBI:58359"/>
        <dbReference type="ChEBI" id="CHEBI:456215"/>
        <dbReference type="EC" id="6.3.5.2"/>
    </reaction>
</comment>
<comment type="pathway">
    <text evidence="1">Purine metabolism; GMP biosynthesis; GMP from XMP (L-Gln route): step 1/1.</text>
</comment>
<comment type="subunit">
    <text evidence="1">Homodimer.</text>
</comment>
<dbReference type="EC" id="6.3.5.2" evidence="1"/>
<dbReference type="EMBL" id="CR555306">
    <property type="protein sequence ID" value="CAI09919.1"/>
    <property type="molecule type" value="Genomic_DNA"/>
</dbReference>
<dbReference type="RefSeq" id="WP_011239570.1">
    <property type="nucleotide sequence ID" value="NC_006513.1"/>
</dbReference>
<dbReference type="SMR" id="Q5NYE5"/>
<dbReference type="STRING" id="76114.ebA6645"/>
<dbReference type="MEROPS" id="C26.A07"/>
<dbReference type="KEGG" id="eba:ebA6645"/>
<dbReference type="eggNOG" id="COG0518">
    <property type="taxonomic scope" value="Bacteria"/>
</dbReference>
<dbReference type="eggNOG" id="COG0519">
    <property type="taxonomic scope" value="Bacteria"/>
</dbReference>
<dbReference type="HOGENOM" id="CLU_014340_0_5_4"/>
<dbReference type="OrthoDB" id="9802219at2"/>
<dbReference type="UniPathway" id="UPA00189">
    <property type="reaction ID" value="UER00296"/>
</dbReference>
<dbReference type="Proteomes" id="UP000006552">
    <property type="component" value="Chromosome"/>
</dbReference>
<dbReference type="GO" id="GO:0005829">
    <property type="term" value="C:cytosol"/>
    <property type="evidence" value="ECO:0007669"/>
    <property type="project" value="TreeGrafter"/>
</dbReference>
<dbReference type="GO" id="GO:0005524">
    <property type="term" value="F:ATP binding"/>
    <property type="evidence" value="ECO:0007669"/>
    <property type="project" value="UniProtKB-UniRule"/>
</dbReference>
<dbReference type="GO" id="GO:0003921">
    <property type="term" value="F:GMP synthase activity"/>
    <property type="evidence" value="ECO:0007669"/>
    <property type="project" value="InterPro"/>
</dbReference>
<dbReference type="CDD" id="cd01742">
    <property type="entry name" value="GATase1_GMP_Synthase"/>
    <property type="match status" value="1"/>
</dbReference>
<dbReference type="CDD" id="cd01997">
    <property type="entry name" value="GMP_synthase_C"/>
    <property type="match status" value="1"/>
</dbReference>
<dbReference type="FunFam" id="3.30.300.10:FF:000002">
    <property type="entry name" value="GMP synthase [glutamine-hydrolyzing]"/>
    <property type="match status" value="1"/>
</dbReference>
<dbReference type="FunFam" id="3.40.50.620:FF:000001">
    <property type="entry name" value="GMP synthase [glutamine-hydrolyzing]"/>
    <property type="match status" value="1"/>
</dbReference>
<dbReference type="FunFam" id="3.40.50.880:FF:000001">
    <property type="entry name" value="GMP synthase [glutamine-hydrolyzing]"/>
    <property type="match status" value="1"/>
</dbReference>
<dbReference type="Gene3D" id="3.30.300.10">
    <property type="match status" value="1"/>
</dbReference>
<dbReference type="Gene3D" id="3.40.50.880">
    <property type="match status" value="1"/>
</dbReference>
<dbReference type="Gene3D" id="3.40.50.620">
    <property type="entry name" value="HUPs"/>
    <property type="match status" value="1"/>
</dbReference>
<dbReference type="HAMAP" id="MF_00344">
    <property type="entry name" value="GMP_synthase"/>
    <property type="match status" value="1"/>
</dbReference>
<dbReference type="InterPro" id="IPR029062">
    <property type="entry name" value="Class_I_gatase-like"/>
</dbReference>
<dbReference type="InterPro" id="IPR017926">
    <property type="entry name" value="GATASE"/>
</dbReference>
<dbReference type="InterPro" id="IPR001674">
    <property type="entry name" value="GMP_synth_C"/>
</dbReference>
<dbReference type="InterPro" id="IPR004739">
    <property type="entry name" value="GMP_synth_GATase"/>
</dbReference>
<dbReference type="InterPro" id="IPR022955">
    <property type="entry name" value="GMP_synthase"/>
</dbReference>
<dbReference type="InterPro" id="IPR025777">
    <property type="entry name" value="GMPS_ATP_PPase_dom"/>
</dbReference>
<dbReference type="InterPro" id="IPR022310">
    <property type="entry name" value="NAD/GMP_synthase"/>
</dbReference>
<dbReference type="InterPro" id="IPR014729">
    <property type="entry name" value="Rossmann-like_a/b/a_fold"/>
</dbReference>
<dbReference type="NCBIfam" id="TIGR00884">
    <property type="entry name" value="guaA_Cterm"/>
    <property type="match status" value="1"/>
</dbReference>
<dbReference type="NCBIfam" id="TIGR00888">
    <property type="entry name" value="guaA_Nterm"/>
    <property type="match status" value="1"/>
</dbReference>
<dbReference type="NCBIfam" id="NF000848">
    <property type="entry name" value="PRK00074.1"/>
    <property type="match status" value="1"/>
</dbReference>
<dbReference type="PANTHER" id="PTHR11922:SF2">
    <property type="entry name" value="GMP SYNTHASE [GLUTAMINE-HYDROLYZING]"/>
    <property type="match status" value="1"/>
</dbReference>
<dbReference type="PANTHER" id="PTHR11922">
    <property type="entry name" value="GMP SYNTHASE-RELATED"/>
    <property type="match status" value="1"/>
</dbReference>
<dbReference type="Pfam" id="PF00117">
    <property type="entry name" value="GATase"/>
    <property type="match status" value="1"/>
</dbReference>
<dbReference type="Pfam" id="PF00958">
    <property type="entry name" value="GMP_synt_C"/>
    <property type="match status" value="1"/>
</dbReference>
<dbReference type="Pfam" id="PF02540">
    <property type="entry name" value="NAD_synthase"/>
    <property type="match status" value="1"/>
</dbReference>
<dbReference type="PRINTS" id="PR00097">
    <property type="entry name" value="ANTSNTHASEII"/>
</dbReference>
<dbReference type="PRINTS" id="PR00096">
    <property type="entry name" value="GATASE"/>
</dbReference>
<dbReference type="SUPFAM" id="SSF52402">
    <property type="entry name" value="Adenine nucleotide alpha hydrolases-like"/>
    <property type="match status" value="1"/>
</dbReference>
<dbReference type="SUPFAM" id="SSF52317">
    <property type="entry name" value="Class I glutamine amidotransferase-like"/>
    <property type="match status" value="1"/>
</dbReference>
<dbReference type="SUPFAM" id="SSF54810">
    <property type="entry name" value="GMP synthetase C-terminal dimerisation domain"/>
    <property type="match status" value="1"/>
</dbReference>
<dbReference type="PROSITE" id="PS51273">
    <property type="entry name" value="GATASE_TYPE_1"/>
    <property type="match status" value="1"/>
</dbReference>
<dbReference type="PROSITE" id="PS51553">
    <property type="entry name" value="GMPS_ATP_PPASE"/>
    <property type="match status" value="1"/>
</dbReference>
<protein>
    <recommendedName>
        <fullName evidence="1">GMP synthase [glutamine-hydrolyzing]</fullName>
        <ecNumber evidence="1">6.3.5.2</ecNumber>
    </recommendedName>
    <alternativeName>
        <fullName evidence="1">GMP synthetase</fullName>
    </alternativeName>
    <alternativeName>
        <fullName evidence="1">Glutamine amidotransferase</fullName>
    </alternativeName>
</protein>
<name>GUAA_AROAE</name>
<gene>
    <name evidence="1" type="primary">guaA</name>
    <name type="ordered locus">AZOSEA37940</name>
    <name type="ORF">ebA6645</name>
</gene>
<accession>Q5NYE5</accession>
<evidence type="ECO:0000255" key="1">
    <source>
        <dbReference type="HAMAP-Rule" id="MF_00344"/>
    </source>
</evidence>
<keyword id="KW-0067">ATP-binding</keyword>
<keyword id="KW-0315">Glutamine amidotransferase</keyword>
<keyword id="KW-0332">GMP biosynthesis</keyword>
<keyword id="KW-0436">Ligase</keyword>
<keyword id="KW-0547">Nucleotide-binding</keyword>
<keyword id="KW-0658">Purine biosynthesis</keyword>
<keyword id="KW-1185">Reference proteome</keyword>
<reference key="1">
    <citation type="journal article" date="2005" name="Arch. Microbiol.">
        <title>The genome sequence of an anaerobic aromatic-degrading denitrifying bacterium, strain EbN1.</title>
        <authorList>
            <person name="Rabus R."/>
            <person name="Kube M."/>
            <person name="Heider J."/>
            <person name="Beck A."/>
            <person name="Heitmann K."/>
            <person name="Widdel F."/>
            <person name="Reinhardt R."/>
        </authorList>
    </citation>
    <scope>NUCLEOTIDE SEQUENCE [LARGE SCALE GENOMIC DNA]</scope>
    <source>
        <strain>DSM 19018 / LMG 30748 / EbN1</strain>
    </source>
</reference>
<proteinExistence type="inferred from homology"/>
<feature type="chain" id="PRO_0000229399" description="GMP synthase [glutamine-hydrolyzing]">
    <location>
        <begin position="1"/>
        <end position="521"/>
    </location>
</feature>
<feature type="domain" description="Glutamine amidotransferase type-1" evidence="1">
    <location>
        <begin position="5"/>
        <end position="203"/>
    </location>
</feature>
<feature type="domain" description="GMPS ATP-PPase" evidence="1">
    <location>
        <begin position="204"/>
        <end position="396"/>
    </location>
</feature>
<feature type="active site" description="Nucleophile" evidence="1">
    <location>
        <position position="82"/>
    </location>
</feature>
<feature type="active site" evidence="1">
    <location>
        <position position="177"/>
    </location>
</feature>
<feature type="active site" evidence="1">
    <location>
        <position position="179"/>
    </location>
</feature>
<feature type="binding site" evidence="1">
    <location>
        <begin position="231"/>
        <end position="237"/>
    </location>
    <ligand>
        <name>ATP</name>
        <dbReference type="ChEBI" id="CHEBI:30616"/>
    </ligand>
</feature>
<sequence>MAHQKILILDFGSQVTQLIARRVREQQVYCEIHPFDVSDDFVREFAPAGVILSGGPNSVYEAVGWHAPQSVFELGVPVLGICYGMQTMAQQLGGSVESSGKREFGYAEIRARGHSELFRSIEDRTNDEGHGLLDVWMSHGDKVTALPPGFKVIASNESCPVAGMADEVRKFYAVQFHPEVTHTIKGRDMLARFVHEICGCGRDWNMPDYVNEAIEKVRAQVGQEEVILGLSGGVDSSVVAALLHRAIGEQLTCVFVDNGLLRLNEAEQVMLTFARNLGVKVIHVDATEQFMGHLKGVSDPEAKRKIIGREFVEVFQAEANKLPNAKWLAQGTIYPDVIESAGSKTGKAHTIKSHHNVGGLPETLNLKLLEPLRELFKDEVRELGIALGLPHEMVYRHPFPGPGLGVRILGEVKQEFAELLRRADAIFIDELRAADWYDKTSQAFAVFLPVKSVGVMGDGRTYEYVVALRAVETQDFMTAHWAELPHSLLGKVSNRIINEVRGINRVVYDISGKPPATIEWE</sequence>